<feature type="chain" id="PRO_1000083872" description="Urease accessory protein UreE">
    <location>
        <begin position="1"/>
        <end position="163"/>
    </location>
</feature>
<feature type="region of interest" description="Disordered" evidence="2">
    <location>
        <begin position="130"/>
        <end position="163"/>
    </location>
</feature>
<feature type="compositionally biased region" description="Basic and acidic residues" evidence="2">
    <location>
        <begin position="146"/>
        <end position="163"/>
    </location>
</feature>
<name>UREE_ALKEH</name>
<organism>
    <name type="scientific">Alkalilimnicola ehrlichii (strain ATCC BAA-1101 / DSM 17681 / MLHE-1)</name>
    <dbReference type="NCBI Taxonomy" id="187272"/>
    <lineage>
        <taxon>Bacteria</taxon>
        <taxon>Pseudomonadati</taxon>
        <taxon>Pseudomonadota</taxon>
        <taxon>Gammaproteobacteria</taxon>
        <taxon>Chromatiales</taxon>
        <taxon>Ectothiorhodospiraceae</taxon>
        <taxon>Alkalilimnicola</taxon>
    </lineage>
</organism>
<accession>Q0AC97</accession>
<gene>
    <name evidence="1" type="primary">ureE</name>
    <name type="ordered locus">Mlg_0185</name>
</gene>
<keyword id="KW-0143">Chaperone</keyword>
<keyword id="KW-0963">Cytoplasm</keyword>
<keyword id="KW-0533">Nickel</keyword>
<keyword id="KW-0996">Nickel insertion</keyword>
<keyword id="KW-1185">Reference proteome</keyword>
<proteinExistence type="inferred from homology"/>
<dbReference type="EMBL" id="CP000453">
    <property type="protein sequence ID" value="ABI55540.1"/>
    <property type="molecule type" value="Genomic_DNA"/>
</dbReference>
<dbReference type="RefSeq" id="WP_011627936.1">
    <property type="nucleotide sequence ID" value="NC_008340.1"/>
</dbReference>
<dbReference type="SMR" id="Q0AC97"/>
<dbReference type="KEGG" id="aeh:Mlg_0185"/>
<dbReference type="eggNOG" id="COG2371">
    <property type="taxonomic scope" value="Bacteria"/>
</dbReference>
<dbReference type="HOGENOM" id="CLU_093757_2_0_6"/>
<dbReference type="OrthoDB" id="5421304at2"/>
<dbReference type="Proteomes" id="UP000001962">
    <property type="component" value="Chromosome"/>
</dbReference>
<dbReference type="GO" id="GO:0005737">
    <property type="term" value="C:cytoplasm"/>
    <property type="evidence" value="ECO:0007669"/>
    <property type="project" value="UniProtKB-SubCell"/>
</dbReference>
<dbReference type="GO" id="GO:0016151">
    <property type="term" value="F:nickel cation binding"/>
    <property type="evidence" value="ECO:0007669"/>
    <property type="project" value="UniProtKB-UniRule"/>
</dbReference>
<dbReference type="GO" id="GO:0051082">
    <property type="term" value="F:unfolded protein binding"/>
    <property type="evidence" value="ECO:0007669"/>
    <property type="project" value="UniProtKB-UniRule"/>
</dbReference>
<dbReference type="GO" id="GO:0006457">
    <property type="term" value="P:protein folding"/>
    <property type="evidence" value="ECO:0007669"/>
    <property type="project" value="InterPro"/>
</dbReference>
<dbReference type="GO" id="GO:0065003">
    <property type="term" value="P:protein-containing complex assembly"/>
    <property type="evidence" value="ECO:0007669"/>
    <property type="project" value="InterPro"/>
</dbReference>
<dbReference type="GO" id="GO:0019627">
    <property type="term" value="P:urea metabolic process"/>
    <property type="evidence" value="ECO:0007669"/>
    <property type="project" value="InterPro"/>
</dbReference>
<dbReference type="CDD" id="cd00571">
    <property type="entry name" value="UreE"/>
    <property type="match status" value="1"/>
</dbReference>
<dbReference type="Gene3D" id="2.60.260.20">
    <property type="entry name" value="Urease metallochaperone UreE, N-terminal domain"/>
    <property type="match status" value="1"/>
</dbReference>
<dbReference type="Gene3D" id="3.30.70.790">
    <property type="entry name" value="UreE, C-terminal domain"/>
    <property type="match status" value="1"/>
</dbReference>
<dbReference type="HAMAP" id="MF_00822">
    <property type="entry name" value="UreE"/>
    <property type="match status" value="1"/>
</dbReference>
<dbReference type="InterPro" id="IPR012406">
    <property type="entry name" value="UreE"/>
</dbReference>
<dbReference type="InterPro" id="IPR007864">
    <property type="entry name" value="UreE_C_dom"/>
</dbReference>
<dbReference type="InterPro" id="IPR004029">
    <property type="entry name" value="UreE_N"/>
</dbReference>
<dbReference type="InterPro" id="IPR036118">
    <property type="entry name" value="UreE_N_sf"/>
</dbReference>
<dbReference type="NCBIfam" id="NF009751">
    <property type="entry name" value="PRK13261.1-1"/>
    <property type="match status" value="1"/>
</dbReference>
<dbReference type="Pfam" id="PF05194">
    <property type="entry name" value="UreE_C"/>
    <property type="match status" value="1"/>
</dbReference>
<dbReference type="Pfam" id="PF02814">
    <property type="entry name" value="UreE_N"/>
    <property type="match status" value="1"/>
</dbReference>
<dbReference type="PIRSF" id="PIRSF036402">
    <property type="entry name" value="Ureas_acces_UreE"/>
    <property type="match status" value="1"/>
</dbReference>
<dbReference type="SMART" id="SM00988">
    <property type="entry name" value="UreE_N"/>
    <property type="match status" value="1"/>
</dbReference>
<dbReference type="SUPFAM" id="SSF69737">
    <property type="entry name" value="Urease metallochaperone UreE, C-terminal domain"/>
    <property type="match status" value="1"/>
</dbReference>
<dbReference type="SUPFAM" id="SSF69287">
    <property type="entry name" value="Urease metallochaperone UreE, N-terminal domain"/>
    <property type="match status" value="1"/>
</dbReference>
<comment type="function">
    <text evidence="1">Involved in urease metallocenter assembly. Binds nickel. Probably functions as a nickel donor during metallocenter assembly.</text>
</comment>
<comment type="subcellular location">
    <subcellularLocation>
        <location evidence="1">Cytoplasm</location>
    </subcellularLocation>
</comment>
<comment type="similarity">
    <text evidence="1">Belongs to the UreE family.</text>
</comment>
<sequence length="163" mass="17591">MLTLTERLPQAAPADATLTLPFEVRQKSRFRATLDDGREVGVMLSRGEILRDGQCLQAGDGTVVRVHAAAEAVSTVRGDDGLALARACYHLGNRHVPLQIGAGFARYLHDHVLDDMLRGLGLEVVSEQAPFEPEPGAYGGGHGHTHSHDHSHQHDPAGHAHEH</sequence>
<protein>
    <recommendedName>
        <fullName evidence="1">Urease accessory protein UreE</fullName>
    </recommendedName>
</protein>
<reference key="1">
    <citation type="submission" date="2006-08" db="EMBL/GenBank/DDBJ databases">
        <title>Complete sequence of Alkalilimnicola ehrilichei MLHE-1.</title>
        <authorList>
            <person name="Copeland A."/>
            <person name="Lucas S."/>
            <person name="Lapidus A."/>
            <person name="Barry K."/>
            <person name="Detter J.C."/>
            <person name="Glavina del Rio T."/>
            <person name="Hammon N."/>
            <person name="Israni S."/>
            <person name="Dalin E."/>
            <person name="Tice H."/>
            <person name="Pitluck S."/>
            <person name="Sims D."/>
            <person name="Brettin T."/>
            <person name="Bruce D."/>
            <person name="Han C."/>
            <person name="Tapia R."/>
            <person name="Gilna P."/>
            <person name="Schmutz J."/>
            <person name="Larimer F."/>
            <person name="Land M."/>
            <person name="Hauser L."/>
            <person name="Kyrpides N."/>
            <person name="Mikhailova N."/>
            <person name="Oremland R.S."/>
            <person name="Hoeft S.E."/>
            <person name="Switzer-Blum J."/>
            <person name="Kulp T."/>
            <person name="King G."/>
            <person name="Tabita R."/>
            <person name="Witte B."/>
            <person name="Santini J.M."/>
            <person name="Basu P."/>
            <person name="Hollibaugh J.T."/>
            <person name="Xie G."/>
            <person name="Stolz J.F."/>
            <person name="Richardson P."/>
        </authorList>
    </citation>
    <scope>NUCLEOTIDE SEQUENCE [LARGE SCALE GENOMIC DNA]</scope>
    <source>
        <strain>ATCC BAA-1101 / DSM 17681 / MLHE-1</strain>
    </source>
</reference>
<evidence type="ECO:0000255" key="1">
    <source>
        <dbReference type="HAMAP-Rule" id="MF_00822"/>
    </source>
</evidence>
<evidence type="ECO:0000256" key="2">
    <source>
        <dbReference type="SAM" id="MobiDB-lite"/>
    </source>
</evidence>